<gene>
    <name type="primary">pip4p2</name>
    <name evidence="2" type="synonym">tmem55a</name>
</gene>
<evidence type="ECO:0000250" key="1"/>
<evidence type="ECO:0000250" key="2">
    <source>
        <dbReference type="UniProtKB" id="Q8N4L2"/>
    </source>
</evidence>
<evidence type="ECO:0000255" key="3"/>
<evidence type="ECO:0000256" key="4">
    <source>
        <dbReference type="SAM" id="MobiDB-lite"/>
    </source>
</evidence>
<comment type="function">
    <text evidence="2">Catalyzes the hydrolysis of phosphatidylinositol-4,5-bisphosphate (PtdIns-4,5-P2) to phosphatidylinositol-4-phosphate (PtdIns-4-P).</text>
</comment>
<comment type="catalytic activity">
    <reaction evidence="2">
        <text>a 1,2-diacyl-sn-glycero-3-phospho-(1D-myo-inositol-4,5-bisphosphate) + H2O = a 1,2-diacyl-sn-glycero-3-phospho-(1D-myo-inositol-5-phosphate) + phosphate</text>
        <dbReference type="Rhea" id="RHEA:25674"/>
        <dbReference type="ChEBI" id="CHEBI:15377"/>
        <dbReference type="ChEBI" id="CHEBI:43474"/>
        <dbReference type="ChEBI" id="CHEBI:57795"/>
        <dbReference type="ChEBI" id="CHEBI:58456"/>
        <dbReference type="EC" id="3.1.3.78"/>
    </reaction>
</comment>
<comment type="subcellular location">
    <subcellularLocation>
        <location evidence="2">Late endosome membrane</location>
        <topology evidence="3">Multi-pass membrane protein</topology>
    </subcellularLocation>
    <subcellularLocation>
        <location evidence="2">Lysosome membrane</location>
        <topology evidence="3">Multi-pass membrane protein</topology>
    </subcellularLocation>
</comment>
<dbReference type="EC" id="3.1.3.78" evidence="2"/>
<dbReference type="EMBL" id="BC075598">
    <property type="protein sequence ID" value="AAH75598.1"/>
    <property type="molecule type" value="mRNA"/>
</dbReference>
<dbReference type="RefSeq" id="NP_001005000.1">
    <property type="nucleotide sequence ID" value="NM_001005000.1"/>
</dbReference>
<dbReference type="SMR" id="Q6DIE4"/>
<dbReference type="FunCoup" id="Q6DIE4">
    <property type="interactions" value="1823"/>
</dbReference>
<dbReference type="STRING" id="8364.ENSXETP00000054786"/>
<dbReference type="PaxDb" id="8364-ENSXETP00000054935"/>
<dbReference type="DNASU" id="448483"/>
<dbReference type="GeneID" id="448483"/>
<dbReference type="KEGG" id="xtr:448483"/>
<dbReference type="AGR" id="Xenbase:XB-GENE-951972"/>
<dbReference type="CTD" id="55529"/>
<dbReference type="Xenbase" id="XB-GENE-951972">
    <property type="gene designation" value="pip4p2"/>
</dbReference>
<dbReference type="eggNOG" id="KOG4684">
    <property type="taxonomic scope" value="Eukaryota"/>
</dbReference>
<dbReference type="HOGENOM" id="CLU_087485_0_0_1"/>
<dbReference type="InParanoid" id="Q6DIE4"/>
<dbReference type="OMA" id="ATYISWA"/>
<dbReference type="OrthoDB" id="9939933at2759"/>
<dbReference type="PhylomeDB" id="Q6DIE4"/>
<dbReference type="TreeFam" id="TF316367"/>
<dbReference type="Proteomes" id="UP000008143">
    <property type="component" value="Chromosome 6"/>
</dbReference>
<dbReference type="Bgee" id="ENSXETG00000014598">
    <property type="expression patterns" value="Expressed in 2-cell stage embryo and 10 other cell types or tissues"/>
</dbReference>
<dbReference type="GO" id="GO:0031902">
    <property type="term" value="C:late endosome membrane"/>
    <property type="evidence" value="ECO:0007669"/>
    <property type="project" value="UniProtKB-SubCell"/>
</dbReference>
<dbReference type="GO" id="GO:0005765">
    <property type="term" value="C:lysosomal membrane"/>
    <property type="evidence" value="ECO:0007669"/>
    <property type="project" value="UniProtKB-SubCell"/>
</dbReference>
<dbReference type="GO" id="GO:0034597">
    <property type="term" value="F:phosphatidylinositol-4,5-bisphosphate 4-phosphatase activity"/>
    <property type="evidence" value="ECO:0007669"/>
    <property type="project" value="UniProtKB-EC"/>
</dbReference>
<dbReference type="GO" id="GO:0046856">
    <property type="term" value="P:phosphatidylinositol dephosphorylation"/>
    <property type="evidence" value="ECO:0000250"/>
    <property type="project" value="UniProtKB"/>
</dbReference>
<dbReference type="InterPro" id="IPR019178">
    <property type="entry name" value="PtdIns-P2-Ptase"/>
</dbReference>
<dbReference type="PANTHER" id="PTHR21014">
    <property type="entry name" value="PHOSPHATIDYLINOSITOL-4,5-BISPHOSPHATE 4-PHOSPHATASE"/>
    <property type="match status" value="1"/>
</dbReference>
<dbReference type="PANTHER" id="PTHR21014:SF5">
    <property type="entry name" value="TYPE 2 PHOSPHATIDYLINOSITOL 4,5-BISPHOSPHATE 4-PHOSPHATASE"/>
    <property type="match status" value="1"/>
</dbReference>
<dbReference type="Pfam" id="PF09788">
    <property type="entry name" value="Tmemb_55A"/>
    <property type="match status" value="1"/>
</dbReference>
<feature type="chain" id="PRO_0000235232" description="Type 2 phosphatidylinositol 4,5-bisphosphate 4-phosphatase">
    <location>
        <begin position="1"/>
        <end position="276"/>
    </location>
</feature>
<feature type="transmembrane region" description="Helical" evidence="3">
    <location>
        <begin position="211"/>
        <end position="231"/>
    </location>
</feature>
<feature type="transmembrane region" description="Helical" evidence="3">
    <location>
        <begin position="246"/>
        <end position="266"/>
    </location>
</feature>
<feature type="region of interest" description="Disordered" evidence="4">
    <location>
        <begin position="1"/>
        <end position="27"/>
    </location>
</feature>
<feature type="short sequence motif" description="CX5R motif">
    <location>
        <begin position="106"/>
        <end position="112"/>
    </location>
</feature>
<feature type="compositionally biased region" description="Basic and acidic residues" evidence="4">
    <location>
        <begin position="1"/>
        <end position="10"/>
    </location>
</feature>
<feature type="compositionally biased region" description="Polar residues" evidence="4">
    <location>
        <begin position="13"/>
        <end position="27"/>
    </location>
</feature>
<feature type="active site" evidence="1">
    <location>
        <position position="106"/>
    </location>
</feature>
<proteinExistence type="evidence at transcript level"/>
<sequence length="276" mass="30184">MAADGIDERSPLISPSSGNVTPTAPPYLQQNNLQAELPPPYTAIASPDASGVPVINCRVCQSLINLDGKLHQHVVKCTVCNEATPIKTPPLGKKYVRCPCNCLLICKDISRRIGCPRPNCRRIINLGPVMLIPEEQPAQPALPVQPEGTRVVCGHCGNTFLWMELRFNTLAKCPHCKKMNCQVPRIQGKNGSAPGKAFRSSVGSALPRRRCCTYITMGMICIFIGVGLTVGTQDFARRFHATYVSWAVAYLVGLVCLIRACYWGAIKFSYPEHSFA</sequence>
<name>PP4P2_XENTR</name>
<reference key="1">
    <citation type="submission" date="2004-06" db="EMBL/GenBank/DDBJ databases">
        <authorList>
            <consortium name="NIH - Xenopus Gene Collection (XGC) project"/>
        </authorList>
    </citation>
    <scope>NUCLEOTIDE SEQUENCE [LARGE SCALE MRNA]</scope>
    <source>
        <tissue>Embryo</tissue>
    </source>
</reference>
<organism>
    <name type="scientific">Xenopus tropicalis</name>
    <name type="common">Western clawed frog</name>
    <name type="synonym">Silurana tropicalis</name>
    <dbReference type="NCBI Taxonomy" id="8364"/>
    <lineage>
        <taxon>Eukaryota</taxon>
        <taxon>Metazoa</taxon>
        <taxon>Chordata</taxon>
        <taxon>Craniata</taxon>
        <taxon>Vertebrata</taxon>
        <taxon>Euteleostomi</taxon>
        <taxon>Amphibia</taxon>
        <taxon>Batrachia</taxon>
        <taxon>Anura</taxon>
        <taxon>Pipoidea</taxon>
        <taxon>Pipidae</taxon>
        <taxon>Xenopodinae</taxon>
        <taxon>Xenopus</taxon>
        <taxon>Silurana</taxon>
    </lineage>
</organism>
<accession>Q6DIE4</accession>
<protein>
    <recommendedName>
        <fullName>Type 2 phosphatidylinositol 4,5-bisphosphate 4-phosphatase</fullName>
        <shortName>Type 2 PtdIns-4,5-P2 4-Ptase</shortName>
        <ecNumber evidence="2">3.1.3.78</ecNumber>
    </recommendedName>
    <alternativeName>
        <fullName>PtdIns-4,5-P2 4-Ptase II</fullName>
    </alternativeName>
    <alternativeName>
        <fullName>Transmembrane protein 55A</fullName>
    </alternativeName>
</protein>
<keyword id="KW-0967">Endosome</keyword>
<keyword id="KW-0378">Hydrolase</keyword>
<keyword id="KW-0443">Lipid metabolism</keyword>
<keyword id="KW-0458">Lysosome</keyword>
<keyword id="KW-0472">Membrane</keyword>
<keyword id="KW-1185">Reference proteome</keyword>
<keyword id="KW-0812">Transmembrane</keyword>
<keyword id="KW-1133">Transmembrane helix</keyword>